<name>Y1307_LATSS</name>
<protein>
    <recommendedName>
        <fullName evidence="1">Probable transcriptional regulatory protein LCA_1307</fullName>
    </recommendedName>
</protein>
<sequence>MSGHSKWHNIQGRKNAQDAKRGKIFQKLSRELFMAARSGGPDPSSNAALRLIMDKARSANMPKDNIKRAIDKADGSDGANYDEITYEGYAPGGVAVLVHALTDNKNRTSSDVRVAFTRNGGTMGAAGSVAYMFDRRGYIAIAREGLDVDEDQMFEDILEAGADDLQTEEDVFEIYTDPKELANVRDILEKKYTLANAELTMIPQNTTPVDPEKVEQFQRLVDALEDNDDVQDVYTAGELPEEE</sequence>
<organism>
    <name type="scientific">Latilactobacillus sakei subsp. sakei (strain 23K)</name>
    <name type="common">Lactobacillus sakei subsp. sakei</name>
    <dbReference type="NCBI Taxonomy" id="314315"/>
    <lineage>
        <taxon>Bacteria</taxon>
        <taxon>Bacillati</taxon>
        <taxon>Bacillota</taxon>
        <taxon>Bacilli</taxon>
        <taxon>Lactobacillales</taxon>
        <taxon>Lactobacillaceae</taxon>
        <taxon>Latilactobacillus</taxon>
    </lineage>
</organism>
<evidence type="ECO:0000255" key="1">
    <source>
        <dbReference type="HAMAP-Rule" id="MF_00693"/>
    </source>
</evidence>
<evidence type="ECO:0000256" key="2">
    <source>
        <dbReference type="SAM" id="MobiDB-lite"/>
    </source>
</evidence>
<dbReference type="EMBL" id="CR936503">
    <property type="protein sequence ID" value="CAI55611.1"/>
    <property type="molecule type" value="Genomic_DNA"/>
</dbReference>
<dbReference type="RefSeq" id="WP_011375002.1">
    <property type="nucleotide sequence ID" value="NC_007576.1"/>
</dbReference>
<dbReference type="SMR" id="Q38W22"/>
<dbReference type="STRING" id="314315.LCA_1307"/>
<dbReference type="KEGG" id="lsa:LCA_1307"/>
<dbReference type="eggNOG" id="COG0217">
    <property type="taxonomic scope" value="Bacteria"/>
</dbReference>
<dbReference type="HOGENOM" id="CLU_062974_3_0_9"/>
<dbReference type="OrthoDB" id="9781053at2"/>
<dbReference type="Proteomes" id="UP000002707">
    <property type="component" value="Chromosome"/>
</dbReference>
<dbReference type="GO" id="GO:0005829">
    <property type="term" value="C:cytosol"/>
    <property type="evidence" value="ECO:0007669"/>
    <property type="project" value="TreeGrafter"/>
</dbReference>
<dbReference type="GO" id="GO:0003677">
    <property type="term" value="F:DNA binding"/>
    <property type="evidence" value="ECO:0007669"/>
    <property type="project" value="UniProtKB-UniRule"/>
</dbReference>
<dbReference type="GO" id="GO:0006355">
    <property type="term" value="P:regulation of DNA-templated transcription"/>
    <property type="evidence" value="ECO:0007669"/>
    <property type="project" value="UniProtKB-UniRule"/>
</dbReference>
<dbReference type="FunFam" id="1.10.10.200:FF:000002">
    <property type="entry name" value="Probable transcriptional regulatory protein CLM62_37755"/>
    <property type="match status" value="1"/>
</dbReference>
<dbReference type="FunFam" id="3.30.70.980:FF:000002">
    <property type="entry name" value="Probable transcriptional regulatory protein YebC"/>
    <property type="match status" value="1"/>
</dbReference>
<dbReference type="Gene3D" id="1.10.10.200">
    <property type="match status" value="1"/>
</dbReference>
<dbReference type="Gene3D" id="3.30.70.980">
    <property type="match status" value="2"/>
</dbReference>
<dbReference type="HAMAP" id="MF_00693">
    <property type="entry name" value="Transcrip_reg_TACO1"/>
    <property type="match status" value="1"/>
</dbReference>
<dbReference type="InterPro" id="IPR017856">
    <property type="entry name" value="Integrase-like_N"/>
</dbReference>
<dbReference type="InterPro" id="IPR048300">
    <property type="entry name" value="TACO1_YebC-like_2nd/3rd_dom"/>
</dbReference>
<dbReference type="InterPro" id="IPR049083">
    <property type="entry name" value="TACO1_YebC_N"/>
</dbReference>
<dbReference type="InterPro" id="IPR002876">
    <property type="entry name" value="Transcrip_reg_TACO1-like"/>
</dbReference>
<dbReference type="InterPro" id="IPR026564">
    <property type="entry name" value="Transcrip_reg_TACO1-like_dom3"/>
</dbReference>
<dbReference type="InterPro" id="IPR029072">
    <property type="entry name" value="YebC-like"/>
</dbReference>
<dbReference type="NCBIfam" id="NF001030">
    <property type="entry name" value="PRK00110.1"/>
    <property type="match status" value="1"/>
</dbReference>
<dbReference type="NCBIfam" id="NF009044">
    <property type="entry name" value="PRK12378.1"/>
    <property type="match status" value="1"/>
</dbReference>
<dbReference type="NCBIfam" id="TIGR01033">
    <property type="entry name" value="YebC/PmpR family DNA-binding transcriptional regulator"/>
    <property type="match status" value="1"/>
</dbReference>
<dbReference type="PANTHER" id="PTHR12532:SF6">
    <property type="entry name" value="TRANSCRIPTIONAL REGULATORY PROTEIN YEBC-RELATED"/>
    <property type="match status" value="1"/>
</dbReference>
<dbReference type="PANTHER" id="PTHR12532">
    <property type="entry name" value="TRANSLATIONAL ACTIVATOR OF CYTOCHROME C OXIDASE 1"/>
    <property type="match status" value="1"/>
</dbReference>
<dbReference type="Pfam" id="PF20772">
    <property type="entry name" value="TACO1_YebC_N"/>
    <property type="match status" value="1"/>
</dbReference>
<dbReference type="Pfam" id="PF01709">
    <property type="entry name" value="Transcrip_reg"/>
    <property type="match status" value="1"/>
</dbReference>
<dbReference type="SUPFAM" id="SSF75625">
    <property type="entry name" value="YebC-like"/>
    <property type="match status" value="1"/>
</dbReference>
<comment type="subcellular location">
    <subcellularLocation>
        <location evidence="1">Cytoplasm</location>
    </subcellularLocation>
</comment>
<comment type="similarity">
    <text evidence="1">Belongs to the TACO1 family.</text>
</comment>
<feature type="chain" id="PRO_0000257075" description="Probable transcriptional regulatory protein LCA_1307">
    <location>
        <begin position="1"/>
        <end position="243"/>
    </location>
</feature>
<feature type="region of interest" description="Disordered" evidence="2">
    <location>
        <begin position="1"/>
        <end position="21"/>
    </location>
</feature>
<proteinExistence type="inferred from homology"/>
<reference key="1">
    <citation type="journal article" date="2005" name="Nat. Biotechnol.">
        <title>The complete genome sequence of the meat-borne lactic acid bacterium Lactobacillus sakei 23K.</title>
        <authorList>
            <person name="Chaillou S."/>
            <person name="Champomier-Verges M.-C."/>
            <person name="Cornet M."/>
            <person name="Crutz-Le Coq A.-M."/>
            <person name="Dudez A.-M."/>
            <person name="Martin V."/>
            <person name="Beaufils S."/>
            <person name="Darbon-Rongere E."/>
            <person name="Bossy R."/>
            <person name="Loux V."/>
            <person name="Zagorec M."/>
        </authorList>
    </citation>
    <scope>NUCLEOTIDE SEQUENCE [LARGE SCALE GENOMIC DNA]</scope>
    <source>
        <strain>23K</strain>
    </source>
</reference>
<keyword id="KW-0963">Cytoplasm</keyword>
<keyword id="KW-0238">DNA-binding</keyword>
<keyword id="KW-1185">Reference proteome</keyword>
<keyword id="KW-0804">Transcription</keyword>
<keyword id="KW-0805">Transcription regulation</keyword>
<gene>
    <name type="ordered locus">LCA_1307</name>
</gene>
<accession>Q38W22</accession>